<sequence>MEVVNALGRRKRAVARVFVSEGTGKITINKRDLAQYFPSTILQYVVKQPLNKLEAAEKYDIKVNLYGGGFTGQSQALRLAIARALVKINPEDKTALRSEGFMTRDSRSVERKKPGQPKARRRFQFSKR</sequence>
<evidence type="ECO:0000255" key="1">
    <source>
        <dbReference type="HAMAP-Rule" id="MF_00532"/>
    </source>
</evidence>
<evidence type="ECO:0000256" key="2">
    <source>
        <dbReference type="SAM" id="MobiDB-lite"/>
    </source>
</evidence>
<evidence type="ECO:0000305" key="3"/>
<comment type="similarity">
    <text evidence="1">Belongs to the universal ribosomal protein uS9 family.</text>
</comment>
<reference key="1">
    <citation type="journal article" date="2007" name="PLoS Biol.">
        <title>Evolution of symbiotic bacteria in the distal human intestine.</title>
        <authorList>
            <person name="Xu J."/>
            <person name="Mahowald M.A."/>
            <person name="Ley R.E."/>
            <person name="Lozupone C.A."/>
            <person name="Hamady M."/>
            <person name="Martens E.C."/>
            <person name="Henrissat B."/>
            <person name="Coutinho P.M."/>
            <person name="Minx P."/>
            <person name="Latreille P."/>
            <person name="Cordum H."/>
            <person name="Van Brunt A."/>
            <person name="Kim K."/>
            <person name="Fulton R.S."/>
            <person name="Fulton L.A."/>
            <person name="Clifton S.W."/>
            <person name="Wilson R.K."/>
            <person name="Knight R.D."/>
            <person name="Gordon J.I."/>
        </authorList>
    </citation>
    <scope>NUCLEOTIDE SEQUENCE [LARGE SCALE GENOMIC DNA]</scope>
    <source>
        <strain>ATCC 8482 / DSM 1447 / JCM 5826 / CCUG 4940 / NBRC 14291 / NCTC 11154</strain>
    </source>
</reference>
<name>RS9_PHOV8</name>
<dbReference type="EMBL" id="CP000139">
    <property type="protein sequence ID" value="ABR39314.1"/>
    <property type="molecule type" value="Genomic_DNA"/>
</dbReference>
<dbReference type="RefSeq" id="WP_005839197.1">
    <property type="nucleotide sequence ID" value="NZ_JANSWM010000064.1"/>
</dbReference>
<dbReference type="SMR" id="A6L0V0"/>
<dbReference type="STRING" id="435590.BVU_1633"/>
<dbReference type="PaxDb" id="435590-BVU_1633"/>
<dbReference type="GeneID" id="93445432"/>
<dbReference type="KEGG" id="bvu:BVU_1633"/>
<dbReference type="eggNOG" id="COG0103">
    <property type="taxonomic scope" value="Bacteria"/>
</dbReference>
<dbReference type="HOGENOM" id="CLU_046483_2_1_10"/>
<dbReference type="BioCyc" id="BVUL435590:G1G59-1718-MONOMER"/>
<dbReference type="Proteomes" id="UP000002861">
    <property type="component" value="Chromosome"/>
</dbReference>
<dbReference type="GO" id="GO:0022627">
    <property type="term" value="C:cytosolic small ribosomal subunit"/>
    <property type="evidence" value="ECO:0007669"/>
    <property type="project" value="TreeGrafter"/>
</dbReference>
<dbReference type="GO" id="GO:0003723">
    <property type="term" value="F:RNA binding"/>
    <property type="evidence" value="ECO:0007669"/>
    <property type="project" value="TreeGrafter"/>
</dbReference>
<dbReference type="GO" id="GO:0003735">
    <property type="term" value="F:structural constituent of ribosome"/>
    <property type="evidence" value="ECO:0007669"/>
    <property type="project" value="InterPro"/>
</dbReference>
<dbReference type="GO" id="GO:0006412">
    <property type="term" value="P:translation"/>
    <property type="evidence" value="ECO:0007669"/>
    <property type="project" value="UniProtKB-UniRule"/>
</dbReference>
<dbReference type="FunFam" id="3.30.230.10:FF:000001">
    <property type="entry name" value="30S ribosomal protein S9"/>
    <property type="match status" value="1"/>
</dbReference>
<dbReference type="Gene3D" id="3.30.230.10">
    <property type="match status" value="1"/>
</dbReference>
<dbReference type="HAMAP" id="MF_00532_B">
    <property type="entry name" value="Ribosomal_uS9_B"/>
    <property type="match status" value="1"/>
</dbReference>
<dbReference type="InterPro" id="IPR020568">
    <property type="entry name" value="Ribosomal_Su5_D2-typ_SF"/>
</dbReference>
<dbReference type="InterPro" id="IPR000754">
    <property type="entry name" value="Ribosomal_uS9"/>
</dbReference>
<dbReference type="InterPro" id="IPR023035">
    <property type="entry name" value="Ribosomal_uS9_bac/plastid"/>
</dbReference>
<dbReference type="InterPro" id="IPR020574">
    <property type="entry name" value="Ribosomal_uS9_CS"/>
</dbReference>
<dbReference type="InterPro" id="IPR014721">
    <property type="entry name" value="Ribsml_uS5_D2-typ_fold_subgr"/>
</dbReference>
<dbReference type="NCBIfam" id="NF001099">
    <property type="entry name" value="PRK00132.1"/>
    <property type="match status" value="1"/>
</dbReference>
<dbReference type="PANTHER" id="PTHR21569">
    <property type="entry name" value="RIBOSOMAL PROTEIN S9"/>
    <property type="match status" value="1"/>
</dbReference>
<dbReference type="PANTHER" id="PTHR21569:SF1">
    <property type="entry name" value="SMALL RIBOSOMAL SUBUNIT PROTEIN US9M"/>
    <property type="match status" value="1"/>
</dbReference>
<dbReference type="Pfam" id="PF00380">
    <property type="entry name" value="Ribosomal_S9"/>
    <property type="match status" value="1"/>
</dbReference>
<dbReference type="SUPFAM" id="SSF54211">
    <property type="entry name" value="Ribosomal protein S5 domain 2-like"/>
    <property type="match status" value="1"/>
</dbReference>
<dbReference type="PROSITE" id="PS00360">
    <property type="entry name" value="RIBOSOMAL_S9"/>
    <property type="match status" value="1"/>
</dbReference>
<keyword id="KW-0687">Ribonucleoprotein</keyword>
<keyword id="KW-0689">Ribosomal protein</keyword>
<proteinExistence type="inferred from homology"/>
<feature type="chain" id="PRO_1000128081" description="Small ribosomal subunit protein uS9">
    <location>
        <begin position="1"/>
        <end position="128"/>
    </location>
</feature>
<feature type="region of interest" description="Disordered" evidence="2">
    <location>
        <begin position="97"/>
        <end position="128"/>
    </location>
</feature>
<feature type="compositionally biased region" description="Basic and acidic residues" evidence="2">
    <location>
        <begin position="97"/>
        <end position="113"/>
    </location>
</feature>
<feature type="compositionally biased region" description="Basic residues" evidence="2">
    <location>
        <begin position="114"/>
        <end position="128"/>
    </location>
</feature>
<organism>
    <name type="scientific">Phocaeicola vulgatus (strain ATCC 8482 / DSM 1447 / JCM 5826 / CCUG 4940 / NBRC 14291 / NCTC 11154)</name>
    <name type="common">Bacteroides vulgatus</name>
    <dbReference type="NCBI Taxonomy" id="435590"/>
    <lineage>
        <taxon>Bacteria</taxon>
        <taxon>Pseudomonadati</taxon>
        <taxon>Bacteroidota</taxon>
        <taxon>Bacteroidia</taxon>
        <taxon>Bacteroidales</taxon>
        <taxon>Bacteroidaceae</taxon>
        <taxon>Phocaeicola</taxon>
    </lineage>
</organism>
<protein>
    <recommendedName>
        <fullName evidence="1">Small ribosomal subunit protein uS9</fullName>
    </recommendedName>
    <alternativeName>
        <fullName evidence="3">30S ribosomal protein S9</fullName>
    </alternativeName>
</protein>
<gene>
    <name evidence="1" type="primary">rpsI</name>
    <name type="ordered locus">BVU_1633</name>
</gene>
<accession>A6L0V0</accession>